<dbReference type="EMBL" id="CP001120">
    <property type="protein sequence ID" value="ACF67459.1"/>
    <property type="molecule type" value="Genomic_DNA"/>
</dbReference>
<dbReference type="RefSeq" id="WP_000714547.1">
    <property type="nucleotide sequence ID" value="NC_011083.1"/>
</dbReference>
<dbReference type="GeneID" id="66756315"/>
<dbReference type="KEGG" id="seh:SeHA_C2041"/>
<dbReference type="HOGENOM" id="CLU_208030_1_0_6"/>
<dbReference type="Proteomes" id="UP000001866">
    <property type="component" value="Chromosome"/>
</dbReference>
<dbReference type="GO" id="GO:0005886">
    <property type="term" value="C:plasma membrane"/>
    <property type="evidence" value="ECO:0007669"/>
    <property type="project" value="UniProtKB-SubCell"/>
</dbReference>
<dbReference type="GO" id="GO:0070298">
    <property type="term" value="P:negative regulation of phosphorelay signal transduction system"/>
    <property type="evidence" value="ECO:0007669"/>
    <property type="project" value="UniProtKB-UniRule"/>
</dbReference>
<dbReference type="HAMAP" id="MF_01596">
    <property type="entry name" value="MgrB"/>
    <property type="match status" value="1"/>
</dbReference>
<dbReference type="InterPro" id="IPR020907">
    <property type="entry name" value="MgrB"/>
</dbReference>
<dbReference type="NCBIfam" id="NF007635">
    <property type="entry name" value="PRK10299.1"/>
    <property type="match status" value="1"/>
</dbReference>
<dbReference type="Pfam" id="PF13998">
    <property type="entry name" value="MgrB"/>
    <property type="match status" value="1"/>
</dbReference>
<name>MGRB_SALHS</name>
<accession>B4TKH1</accession>
<organism>
    <name type="scientific">Salmonella heidelberg (strain SL476)</name>
    <dbReference type="NCBI Taxonomy" id="454169"/>
    <lineage>
        <taxon>Bacteria</taxon>
        <taxon>Pseudomonadati</taxon>
        <taxon>Pseudomonadota</taxon>
        <taxon>Gammaproteobacteria</taxon>
        <taxon>Enterobacterales</taxon>
        <taxon>Enterobacteriaceae</taxon>
        <taxon>Salmonella</taxon>
    </lineage>
</organism>
<evidence type="ECO:0000255" key="1">
    <source>
        <dbReference type="HAMAP-Rule" id="MF_01596"/>
    </source>
</evidence>
<comment type="function">
    <text evidence="1">PhoP-regulated transcription is redox-sensitive, being activated when the periplasm becomes more reducing. MgrB acts between DsbA/DsbB and PhoP/PhoQ in this pathway. Represses PhoP/PhoQ signaling, possibly by binding to the periplasmic domain of PhoQ, altering its activity and that of downstream effector PhoP.</text>
</comment>
<comment type="subunit">
    <text evidence="1">May form homooligomers. Probably interacts with the periplasmic domain of PhoQ.</text>
</comment>
<comment type="subcellular location">
    <subcellularLocation>
        <location evidence="1">Cell inner membrane</location>
        <topology evidence="1">Single-pass membrane protein</topology>
    </subcellularLocation>
</comment>
<comment type="similarity">
    <text evidence="1">Belongs to the MgrB family.</text>
</comment>
<protein>
    <recommendedName>
        <fullName evidence="1">PhoP/PhoQ regulator MgrB</fullName>
    </recommendedName>
</protein>
<sequence>MKKFRWVVLGIVVVVCLLLWAQVFNIMCDQDVQFFSGICAINKFIPW</sequence>
<reference key="1">
    <citation type="journal article" date="2011" name="J. Bacteriol.">
        <title>Comparative genomics of 28 Salmonella enterica isolates: evidence for CRISPR-mediated adaptive sublineage evolution.</title>
        <authorList>
            <person name="Fricke W.F."/>
            <person name="Mammel M.K."/>
            <person name="McDermott P.F."/>
            <person name="Tartera C."/>
            <person name="White D.G."/>
            <person name="Leclerc J.E."/>
            <person name="Ravel J."/>
            <person name="Cebula T.A."/>
        </authorList>
    </citation>
    <scope>NUCLEOTIDE SEQUENCE [LARGE SCALE GENOMIC DNA]</scope>
    <source>
        <strain>SL476</strain>
    </source>
</reference>
<keyword id="KW-0997">Cell inner membrane</keyword>
<keyword id="KW-1003">Cell membrane</keyword>
<keyword id="KW-0472">Membrane</keyword>
<keyword id="KW-0812">Transmembrane</keyword>
<keyword id="KW-1133">Transmembrane helix</keyword>
<proteinExistence type="inferred from homology"/>
<feature type="chain" id="PRO_1000201573" description="PhoP/PhoQ regulator MgrB">
    <location>
        <begin position="1"/>
        <end position="47"/>
    </location>
</feature>
<feature type="transmembrane region" description="Helical" evidence="1">
    <location>
        <begin position="6"/>
        <end position="26"/>
    </location>
</feature>
<gene>
    <name evidence="1" type="primary">mgrB</name>
    <name type="ordered locus">SeHA_C2041</name>
</gene>